<accession>A5D2F9</accession>
<organism>
    <name type="scientific">Pelotomaculum thermopropionicum (strain DSM 13744 / JCM 10971 / SI)</name>
    <dbReference type="NCBI Taxonomy" id="370438"/>
    <lineage>
        <taxon>Bacteria</taxon>
        <taxon>Bacillati</taxon>
        <taxon>Bacillota</taxon>
        <taxon>Clostridia</taxon>
        <taxon>Eubacteriales</taxon>
        <taxon>Desulfotomaculaceae</taxon>
        <taxon>Pelotomaculum</taxon>
    </lineage>
</organism>
<gene>
    <name evidence="2" type="primary">ddl</name>
    <name type="ordered locus">PTH_1390</name>
</gene>
<feature type="chain" id="PRO_0000341148" description="D-alanine--D-alanine ligase">
    <location>
        <begin position="1"/>
        <end position="318"/>
    </location>
</feature>
<feature type="domain" description="ATP-grasp" evidence="2">
    <location>
        <begin position="101"/>
        <end position="307"/>
    </location>
</feature>
<feature type="binding site" evidence="2">
    <location>
        <begin position="135"/>
        <end position="190"/>
    </location>
    <ligand>
        <name>ATP</name>
        <dbReference type="ChEBI" id="CHEBI:30616"/>
    </ligand>
</feature>
<feature type="binding site" evidence="2">
    <location>
        <position position="261"/>
    </location>
    <ligand>
        <name>Mg(2+)</name>
        <dbReference type="ChEBI" id="CHEBI:18420"/>
        <label>1</label>
    </ligand>
</feature>
<feature type="binding site" evidence="2">
    <location>
        <position position="274"/>
    </location>
    <ligand>
        <name>Mg(2+)</name>
        <dbReference type="ChEBI" id="CHEBI:18420"/>
        <label>1</label>
    </ligand>
</feature>
<feature type="binding site" evidence="2">
    <location>
        <position position="274"/>
    </location>
    <ligand>
        <name>Mg(2+)</name>
        <dbReference type="ChEBI" id="CHEBI:18420"/>
        <label>2</label>
    </ligand>
</feature>
<feature type="binding site" evidence="2">
    <location>
        <position position="276"/>
    </location>
    <ligand>
        <name>Mg(2+)</name>
        <dbReference type="ChEBI" id="CHEBI:18420"/>
        <label>2</label>
    </ligand>
</feature>
<proteinExistence type="inferred from homology"/>
<comment type="function">
    <text evidence="2">Cell wall formation.</text>
</comment>
<comment type="catalytic activity">
    <reaction evidence="2">
        <text>2 D-alanine + ATP = D-alanyl-D-alanine + ADP + phosphate + H(+)</text>
        <dbReference type="Rhea" id="RHEA:11224"/>
        <dbReference type="ChEBI" id="CHEBI:15378"/>
        <dbReference type="ChEBI" id="CHEBI:30616"/>
        <dbReference type="ChEBI" id="CHEBI:43474"/>
        <dbReference type="ChEBI" id="CHEBI:57416"/>
        <dbReference type="ChEBI" id="CHEBI:57822"/>
        <dbReference type="ChEBI" id="CHEBI:456216"/>
        <dbReference type="EC" id="6.3.2.4"/>
    </reaction>
</comment>
<comment type="cofactor">
    <cofactor evidence="1">
        <name>Mg(2+)</name>
        <dbReference type="ChEBI" id="CHEBI:18420"/>
    </cofactor>
    <cofactor evidence="1">
        <name>Mn(2+)</name>
        <dbReference type="ChEBI" id="CHEBI:29035"/>
    </cofactor>
    <text evidence="1">Binds 2 magnesium or manganese ions per subunit.</text>
</comment>
<comment type="pathway">
    <text evidence="2">Cell wall biogenesis; peptidoglycan biosynthesis.</text>
</comment>
<comment type="subcellular location">
    <subcellularLocation>
        <location evidence="2">Cytoplasm</location>
    </subcellularLocation>
</comment>
<comment type="similarity">
    <text evidence="2">Belongs to the D-alanine--D-alanine ligase family.</text>
</comment>
<protein>
    <recommendedName>
        <fullName evidence="2">D-alanine--D-alanine ligase</fullName>
        <ecNumber evidence="2">6.3.2.4</ecNumber>
    </recommendedName>
    <alternativeName>
        <fullName evidence="2">D-Ala-D-Ala ligase</fullName>
    </alternativeName>
    <alternativeName>
        <fullName evidence="2">D-alanylalanine synthetase</fullName>
    </alternativeName>
</protein>
<name>DDL_PELTS</name>
<keyword id="KW-0067">ATP-binding</keyword>
<keyword id="KW-0133">Cell shape</keyword>
<keyword id="KW-0961">Cell wall biogenesis/degradation</keyword>
<keyword id="KW-0963">Cytoplasm</keyword>
<keyword id="KW-0436">Ligase</keyword>
<keyword id="KW-0460">Magnesium</keyword>
<keyword id="KW-0464">Manganese</keyword>
<keyword id="KW-0479">Metal-binding</keyword>
<keyword id="KW-0547">Nucleotide-binding</keyword>
<keyword id="KW-0573">Peptidoglycan synthesis</keyword>
<keyword id="KW-1185">Reference proteome</keyword>
<sequence>MTLKVGVLMGGRSSEREVSLKTGEAVYNALKVKNYLAVKIDVGLDVVERIKEERIDLAFIALHGRYGEDGTIQGLLEMLDIPYTGSGVLASALAMDKAATKKIIQYEGLPTPPFMLVEKKEALKESLQACSERICREMGLPLVVKAPTQGSTIGMSFVHKEEDMAGALELAYDYDPVALVEQFIRGTEVTASILGNEEPVALPLIEIVSATGVYDYKAKYTAGMSDHIIPPRIPEKQQNAIKKLAVSTFKSLGCRGLARVDFIVDKQGNPFILEVNTIPGMTATSLFPDAARAAGIEFPDLIEKLVELAMENCGIRRR</sequence>
<reference key="1">
    <citation type="journal article" date="2008" name="Genome Res.">
        <title>The genome of Pelotomaculum thermopropionicum reveals niche-associated evolution in anaerobic microbiota.</title>
        <authorList>
            <person name="Kosaka T."/>
            <person name="Kato S."/>
            <person name="Shimoyama T."/>
            <person name="Ishii S."/>
            <person name="Abe T."/>
            <person name="Watanabe K."/>
        </authorList>
    </citation>
    <scope>NUCLEOTIDE SEQUENCE [LARGE SCALE GENOMIC DNA]</scope>
    <source>
        <strain>DSM 13744 / JCM 10971 / SI</strain>
    </source>
</reference>
<evidence type="ECO:0000250" key="1"/>
<evidence type="ECO:0000255" key="2">
    <source>
        <dbReference type="HAMAP-Rule" id="MF_00047"/>
    </source>
</evidence>
<dbReference type="EC" id="6.3.2.4" evidence="2"/>
<dbReference type="EMBL" id="AP009389">
    <property type="protein sequence ID" value="BAF59571.1"/>
    <property type="molecule type" value="Genomic_DNA"/>
</dbReference>
<dbReference type="SMR" id="A5D2F9"/>
<dbReference type="STRING" id="370438.PTH_1390"/>
<dbReference type="KEGG" id="pth:PTH_1390"/>
<dbReference type="eggNOG" id="COG1181">
    <property type="taxonomic scope" value="Bacteria"/>
</dbReference>
<dbReference type="HOGENOM" id="CLU_039268_2_0_9"/>
<dbReference type="UniPathway" id="UPA00219"/>
<dbReference type="Proteomes" id="UP000006556">
    <property type="component" value="Chromosome"/>
</dbReference>
<dbReference type="GO" id="GO:0005737">
    <property type="term" value="C:cytoplasm"/>
    <property type="evidence" value="ECO:0007669"/>
    <property type="project" value="UniProtKB-SubCell"/>
</dbReference>
<dbReference type="GO" id="GO:0005524">
    <property type="term" value="F:ATP binding"/>
    <property type="evidence" value="ECO:0007669"/>
    <property type="project" value="UniProtKB-KW"/>
</dbReference>
<dbReference type="GO" id="GO:0008716">
    <property type="term" value="F:D-alanine-D-alanine ligase activity"/>
    <property type="evidence" value="ECO:0007669"/>
    <property type="project" value="UniProtKB-UniRule"/>
</dbReference>
<dbReference type="GO" id="GO:0046872">
    <property type="term" value="F:metal ion binding"/>
    <property type="evidence" value="ECO:0007669"/>
    <property type="project" value="UniProtKB-KW"/>
</dbReference>
<dbReference type="GO" id="GO:0071555">
    <property type="term" value="P:cell wall organization"/>
    <property type="evidence" value="ECO:0007669"/>
    <property type="project" value="UniProtKB-KW"/>
</dbReference>
<dbReference type="GO" id="GO:0009252">
    <property type="term" value="P:peptidoglycan biosynthetic process"/>
    <property type="evidence" value="ECO:0007669"/>
    <property type="project" value="UniProtKB-UniRule"/>
</dbReference>
<dbReference type="GO" id="GO:0008360">
    <property type="term" value="P:regulation of cell shape"/>
    <property type="evidence" value="ECO:0007669"/>
    <property type="project" value="UniProtKB-KW"/>
</dbReference>
<dbReference type="FunFam" id="3.30.470.20:FF:000008">
    <property type="entry name" value="D-alanine--D-alanine ligase"/>
    <property type="match status" value="1"/>
</dbReference>
<dbReference type="Gene3D" id="3.40.50.20">
    <property type="match status" value="1"/>
</dbReference>
<dbReference type="Gene3D" id="3.30.1490.20">
    <property type="entry name" value="ATP-grasp fold, A domain"/>
    <property type="match status" value="1"/>
</dbReference>
<dbReference type="Gene3D" id="3.30.470.20">
    <property type="entry name" value="ATP-grasp fold, B domain"/>
    <property type="match status" value="1"/>
</dbReference>
<dbReference type="HAMAP" id="MF_00047">
    <property type="entry name" value="Dala_Dala_lig"/>
    <property type="match status" value="1"/>
</dbReference>
<dbReference type="InterPro" id="IPR011761">
    <property type="entry name" value="ATP-grasp"/>
</dbReference>
<dbReference type="InterPro" id="IPR013815">
    <property type="entry name" value="ATP_grasp_subdomain_1"/>
</dbReference>
<dbReference type="InterPro" id="IPR000291">
    <property type="entry name" value="D-Ala_lig_Van_CS"/>
</dbReference>
<dbReference type="InterPro" id="IPR005905">
    <property type="entry name" value="D_ala_D_ala"/>
</dbReference>
<dbReference type="InterPro" id="IPR011095">
    <property type="entry name" value="Dala_Dala_lig_C"/>
</dbReference>
<dbReference type="InterPro" id="IPR011127">
    <property type="entry name" value="Dala_Dala_lig_N"/>
</dbReference>
<dbReference type="InterPro" id="IPR016185">
    <property type="entry name" value="PreATP-grasp_dom_sf"/>
</dbReference>
<dbReference type="NCBIfam" id="TIGR01205">
    <property type="entry name" value="D_ala_D_alaTIGR"/>
    <property type="match status" value="1"/>
</dbReference>
<dbReference type="NCBIfam" id="NF002378">
    <property type="entry name" value="PRK01372.1"/>
    <property type="match status" value="1"/>
</dbReference>
<dbReference type="NCBIfam" id="NF002528">
    <property type="entry name" value="PRK01966.1-4"/>
    <property type="match status" value="1"/>
</dbReference>
<dbReference type="PANTHER" id="PTHR23132">
    <property type="entry name" value="D-ALANINE--D-ALANINE LIGASE"/>
    <property type="match status" value="1"/>
</dbReference>
<dbReference type="PANTHER" id="PTHR23132:SF23">
    <property type="entry name" value="D-ALANINE--D-ALANINE LIGASE B"/>
    <property type="match status" value="1"/>
</dbReference>
<dbReference type="Pfam" id="PF07478">
    <property type="entry name" value="Dala_Dala_lig_C"/>
    <property type="match status" value="1"/>
</dbReference>
<dbReference type="Pfam" id="PF01820">
    <property type="entry name" value="Dala_Dala_lig_N"/>
    <property type="match status" value="1"/>
</dbReference>
<dbReference type="PIRSF" id="PIRSF039102">
    <property type="entry name" value="Ddl/VanB"/>
    <property type="match status" value="1"/>
</dbReference>
<dbReference type="SUPFAM" id="SSF56059">
    <property type="entry name" value="Glutathione synthetase ATP-binding domain-like"/>
    <property type="match status" value="1"/>
</dbReference>
<dbReference type="SUPFAM" id="SSF52440">
    <property type="entry name" value="PreATP-grasp domain"/>
    <property type="match status" value="1"/>
</dbReference>
<dbReference type="PROSITE" id="PS50975">
    <property type="entry name" value="ATP_GRASP"/>
    <property type="match status" value="1"/>
</dbReference>
<dbReference type="PROSITE" id="PS00843">
    <property type="entry name" value="DALA_DALA_LIGASE_1"/>
    <property type="match status" value="1"/>
</dbReference>
<dbReference type="PROSITE" id="PS00844">
    <property type="entry name" value="DALA_DALA_LIGASE_2"/>
    <property type="match status" value="1"/>
</dbReference>